<accession>Q9FH13</accession>
<accession>Q53XH2</accession>
<organism>
    <name type="scientific">Arabidopsis thaliana</name>
    <name type="common">Mouse-ear cress</name>
    <dbReference type="NCBI Taxonomy" id="3702"/>
    <lineage>
        <taxon>Eukaryota</taxon>
        <taxon>Viridiplantae</taxon>
        <taxon>Streptophyta</taxon>
        <taxon>Embryophyta</taxon>
        <taxon>Tracheophyta</taxon>
        <taxon>Spermatophyta</taxon>
        <taxon>Magnoliopsida</taxon>
        <taxon>eudicotyledons</taxon>
        <taxon>Gunneridae</taxon>
        <taxon>Pentapetalae</taxon>
        <taxon>rosids</taxon>
        <taxon>malvids</taxon>
        <taxon>Brassicales</taxon>
        <taxon>Brassicaceae</taxon>
        <taxon>Camelineae</taxon>
        <taxon>Arabidopsis</taxon>
    </lineage>
</organism>
<reference key="1">
    <citation type="journal article" date="2000" name="DNA Res.">
        <title>Structural analysis of Arabidopsis thaliana chromosome 5. X. Sequence features of the regions of 3,076,755 bp covered by sixty P1 and TAC clones.</title>
        <authorList>
            <person name="Sato S."/>
            <person name="Nakamura Y."/>
            <person name="Kaneko T."/>
            <person name="Katoh T."/>
            <person name="Asamizu E."/>
            <person name="Kotani H."/>
            <person name="Tabata S."/>
        </authorList>
    </citation>
    <scope>NUCLEOTIDE SEQUENCE [LARGE SCALE GENOMIC DNA]</scope>
    <source>
        <strain>cv. Columbia</strain>
    </source>
</reference>
<reference key="2">
    <citation type="journal article" date="2017" name="Plant J.">
        <title>Araport11: a complete reannotation of the Arabidopsis thaliana reference genome.</title>
        <authorList>
            <person name="Cheng C.Y."/>
            <person name="Krishnakumar V."/>
            <person name="Chan A.P."/>
            <person name="Thibaud-Nissen F."/>
            <person name="Schobel S."/>
            <person name="Town C.D."/>
        </authorList>
    </citation>
    <scope>GENOME REANNOTATION</scope>
    <source>
        <strain>cv. Columbia</strain>
    </source>
</reference>
<reference key="3">
    <citation type="submission" date="2003-12" db="EMBL/GenBank/DDBJ databases">
        <title>Arabidopsis ORF clones.</title>
        <authorList>
            <person name="Kim C.J."/>
            <person name="Chen H."/>
            <person name="Cheuk R.F."/>
            <person name="Shinn P."/>
            <person name="Ecker J.R."/>
        </authorList>
    </citation>
    <scope>NUCLEOTIDE SEQUENCE [LARGE SCALE MRNA]</scope>
    <source>
        <strain>cv. Columbia</strain>
    </source>
</reference>
<reference key="4">
    <citation type="journal article" date="2009" name="Plant Physiol.">
        <title>Large-scale Arabidopsis phosphoproteome profiling reveals novel chloroplast kinase substrates and phosphorylation networks.</title>
        <authorList>
            <person name="Reiland S."/>
            <person name="Messerli G."/>
            <person name="Baerenfaller K."/>
            <person name="Gerrits B."/>
            <person name="Endler A."/>
            <person name="Grossmann J."/>
            <person name="Gruissem W."/>
            <person name="Baginsky S."/>
        </authorList>
    </citation>
    <scope>IDENTIFICATION BY MASS SPECTROMETRY [LARGE SCALE ANALYSIS]</scope>
</reference>
<reference key="5">
    <citation type="journal article" date="2012" name="Mol. Cell. Proteomics">
        <title>Comparative large-scale characterisation of plant vs. mammal proteins reveals similar and idiosyncratic N-alpha acetylation features.</title>
        <authorList>
            <person name="Bienvenut W.V."/>
            <person name="Sumpton D."/>
            <person name="Martinez A."/>
            <person name="Lilla S."/>
            <person name="Espagne C."/>
            <person name="Meinnel T."/>
            <person name="Giglione C."/>
        </authorList>
    </citation>
    <scope>ACETYLATION [LARGE SCALE ANALYSIS] AT ALA-2</scope>
    <scope>CLEAVAGE OF INITIATOR METHIONINE [LARGE SCALE ANALYSIS]</scope>
    <scope>IDENTIFICATION BY MASS SPECTROMETRY [LARGE SCALE ANALYSIS]</scope>
</reference>
<dbReference type="EC" id="4.1.3.17"/>
<dbReference type="EC" id="4.1.1.112"/>
<dbReference type="EMBL" id="AB023029">
    <property type="protein sequence ID" value="BAB09117.1"/>
    <property type="molecule type" value="Genomic_DNA"/>
</dbReference>
<dbReference type="EMBL" id="CP002688">
    <property type="protein sequence ID" value="AED96742.1"/>
    <property type="molecule type" value="Genomic_DNA"/>
</dbReference>
<dbReference type="EMBL" id="CP002688">
    <property type="protein sequence ID" value="ANM69380.1"/>
    <property type="molecule type" value="Genomic_DNA"/>
</dbReference>
<dbReference type="EMBL" id="CP002688">
    <property type="protein sequence ID" value="ANM69381.1"/>
    <property type="molecule type" value="Genomic_DNA"/>
</dbReference>
<dbReference type="EMBL" id="BT010892">
    <property type="protein sequence ID" value="AAR24670.1"/>
    <property type="molecule type" value="mRNA"/>
</dbReference>
<dbReference type="EMBL" id="BT010934">
    <property type="protein sequence ID" value="AAR24712.1"/>
    <property type="molecule type" value="mRNA"/>
</dbReference>
<dbReference type="RefSeq" id="NP_001331062.1">
    <property type="nucleotide sequence ID" value="NM_001345190.1"/>
</dbReference>
<dbReference type="RefSeq" id="NP_001331063.1">
    <property type="nucleotide sequence ID" value="NM_001345193.1"/>
</dbReference>
<dbReference type="RefSeq" id="NP_200437.1">
    <property type="nucleotide sequence ID" value="NM_125009.4"/>
</dbReference>
<dbReference type="SMR" id="Q9FH13"/>
<dbReference type="BioGRID" id="20969">
    <property type="interactions" value="1"/>
</dbReference>
<dbReference type="FunCoup" id="Q9FH13">
    <property type="interactions" value="115"/>
</dbReference>
<dbReference type="IntAct" id="Q9FH13">
    <property type="interactions" value="1"/>
</dbReference>
<dbReference type="STRING" id="3702.Q9FH13"/>
<dbReference type="iPTMnet" id="Q9FH13"/>
<dbReference type="PaxDb" id="3702-AT5G56260.1"/>
<dbReference type="ProteomicsDB" id="228202"/>
<dbReference type="DNASU" id="835725"/>
<dbReference type="EnsemblPlants" id="AT5G56260.1">
    <property type="protein sequence ID" value="AT5G56260.1"/>
    <property type="gene ID" value="AT5G56260"/>
</dbReference>
<dbReference type="EnsemblPlants" id="AT5G56260.2">
    <property type="protein sequence ID" value="AT5G56260.2"/>
    <property type="gene ID" value="AT5G56260"/>
</dbReference>
<dbReference type="EnsemblPlants" id="AT5G56260.5">
    <property type="protein sequence ID" value="AT5G56260.5"/>
    <property type="gene ID" value="AT5G56260"/>
</dbReference>
<dbReference type="GeneID" id="835725"/>
<dbReference type="Gramene" id="AT5G56260.1">
    <property type="protein sequence ID" value="AT5G56260.1"/>
    <property type="gene ID" value="AT5G56260"/>
</dbReference>
<dbReference type="Gramene" id="AT5G56260.2">
    <property type="protein sequence ID" value="AT5G56260.2"/>
    <property type="gene ID" value="AT5G56260"/>
</dbReference>
<dbReference type="Gramene" id="AT5G56260.5">
    <property type="protein sequence ID" value="AT5G56260.5"/>
    <property type="gene ID" value="AT5G56260"/>
</dbReference>
<dbReference type="KEGG" id="ath:AT5G56260"/>
<dbReference type="Araport" id="AT5G56260"/>
<dbReference type="TAIR" id="AT5G56260"/>
<dbReference type="eggNOG" id="ENOG502S32I">
    <property type="taxonomic scope" value="Eukaryota"/>
</dbReference>
<dbReference type="HOGENOM" id="CLU_072626_4_1_1"/>
<dbReference type="InParanoid" id="Q9FH13"/>
<dbReference type="OrthoDB" id="1476984at2759"/>
<dbReference type="PhylomeDB" id="Q9FH13"/>
<dbReference type="PRO" id="PR:Q9FH13"/>
<dbReference type="Proteomes" id="UP000006548">
    <property type="component" value="Chromosome 5"/>
</dbReference>
<dbReference type="ExpressionAtlas" id="Q9FH13">
    <property type="expression patterns" value="baseline and differential"/>
</dbReference>
<dbReference type="GO" id="GO:0009536">
    <property type="term" value="C:plastid"/>
    <property type="evidence" value="ECO:0007005"/>
    <property type="project" value="TAIR"/>
</dbReference>
<dbReference type="GO" id="GO:0047443">
    <property type="term" value="F:4-hydroxy-4-methyl-2-oxoglutarate aldolase activity"/>
    <property type="evidence" value="ECO:0007669"/>
    <property type="project" value="UniProtKB-EC"/>
</dbReference>
<dbReference type="GO" id="GO:0046872">
    <property type="term" value="F:metal ion binding"/>
    <property type="evidence" value="ECO:0007669"/>
    <property type="project" value="UniProtKB-KW"/>
</dbReference>
<dbReference type="GO" id="GO:0008948">
    <property type="term" value="F:oxaloacetate decarboxylase activity"/>
    <property type="evidence" value="ECO:0007669"/>
    <property type="project" value="UniProtKB-EC"/>
</dbReference>
<dbReference type="GO" id="GO:0008428">
    <property type="term" value="F:ribonuclease inhibitor activity"/>
    <property type="evidence" value="ECO:0007669"/>
    <property type="project" value="InterPro"/>
</dbReference>
<dbReference type="GO" id="GO:0051252">
    <property type="term" value="P:regulation of RNA metabolic process"/>
    <property type="evidence" value="ECO:0007669"/>
    <property type="project" value="InterPro"/>
</dbReference>
<dbReference type="CDD" id="cd16841">
    <property type="entry name" value="RraA_family"/>
    <property type="match status" value="1"/>
</dbReference>
<dbReference type="Gene3D" id="3.50.30.40">
    <property type="entry name" value="Ribonuclease E inhibitor RraA/RraA-like"/>
    <property type="match status" value="1"/>
</dbReference>
<dbReference type="InterPro" id="IPR010203">
    <property type="entry name" value="RraA"/>
</dbReference>
<dbReference type="InterPro" id="IPR005493">
    <property type="entry name" value="RraA/RraA-like"/>
</dbReference>
<dbReference type="InterPro" id="IPR036704">
    <property type="entry name" value="RraA/RraA-like_sf"/>
</dbReference>
<dbReference type="NCBIfam" id="TIGR01935">
    <property type="entry name" value="NOT-MenG"/>
    <property type="match status" value="1"/>
</dbReference>
<dbReference type="NCBIfam" id="NF006875">
    <property type="entry name" value="PRK09372.1"/>
    <property type="match status" value="1"/>
</dbReference>
<dbReference type="PANTHER" id="PTHR33254">
    <property type="entry name" value="4-HYDROXY-4-METHYL-2-OXOGLUTARATE ALDOLASE 3-RELATED"/>
    <property type="match status" value="1"/>
</dbReference>
<dbReference type="PANTHER" id="PTHR33254:SF4">
    <property type="entry name" value="4-HYDROXY-4-METHYL-2-OXOGLUTARATE ALDOLASE 3-RELATED"/>
    <property type="match status" value="1"/>
</dbReference>
<dbReference type="Pfam" id="PF03737">
    <property type="entry name" value="RraA-like"/>
    <property type="match status" value="1"/>
</dbReference>
<dbReference type="SUPFAM" id="SSF89562">
    <property type="entry name" value="RraA-like"/>
    <property type="match status" value="1"/>
</dbReference>
<protein>
    <recommendedName>
        <fullName>Putative 4-hydroxy-4-methyl-2-oxoglutarate aldolase 3</fullName>
        <shortName>HMG aldolase 3</shortName>
        <ecNumber>4.1.3.17</ecNumber>
    </recommendedName>
    <alternativeName>
        <fullName>Oxaloacetate decarboxylase</fullName>
        <shortName>OAA decarboxylase</shortName>
        <ecNumber>4.1.1.112</ecNumber>
    </alternativeName>
    <alternativeName>
        <fullName>Regulator of ribonuclease activity homolog 3</fullName>
    </alternativeName>
    <alternativeName>
        <fullName>RraA-like protein 3</fullName>
    </alternativeName>
</protein>
<feature type="initiator methionine" description="Removed" evidence="3">
    <location>
        <position position="1"/>
    </location>
</feature>
<feature type="chain" id="PRO_0000209654" description="Putative 4-hydroxy-4-methyl-2-oxoglutarate aldolase 3">
    <location>
        <begin position="2"/>
        <end position="166"/>
    </location>
</feature>
<feature type="binding site" evidence="1">
    <location>
        <begin position="81"/>
        <end position="84"/>
    </location>
    <ligand>
        <name>substrate</name>
    </ligand>
</feature>
<feature type="binding site" evidence="1">
    <location>
        <position position="103"/>
    </location>
    <ligand>
        <name>substrate</name>
    </ligand>
</feature>
<feature type="binding site" evidence="1">
    <location>
        <position position="104"/>
    </location>
    <ligand>
        <name>a divalent metal cation</name>
        <dbReference type="ChEBI" id="CHEBI:60240"/>
    </ligand>
</feature>
<feature type="modified residue" description="N-acetylalanine" evidence="3">
    <location>
        <position position="2"/>
    </location>
</feature>
<evidence type="ECO:0000250" key="1"/>
<evidence type="ECO:0000305" key="2"/>
<evidence type="ECO:0007744" key="3">
    <source>
    </source>
</evidence>
<keyword id="KW-0007">Acetylation</keyword>
<keyword id="KW-0456">Lyase</keyword>
<keyword id="KW-0479">Metal-binding</keyword>
<keyword id="KW-1185">Reference proteome</keyword>
<proteinExistence type="evidence at protein level"/>
<sequence length="166" mass="17567">MAAFATAEACDSNAELISNGDLRALHPIFKIYGQRRCFSGPIVTLKVFEDNVLVRNQLETKGEGGVLVIDGGGSMRCALVGGNLGQLAQNNGWSGIVVNGCVRDVDEINDCDVGVRALGSNPLKSTKKGHGEKNVPVHIGGTLIRDGEWLYADSDGILISKTELSV</sequence>
<comment type="function">
    <text evidence="1">Catalyzes the aldol cleavage of 4-hydroxy-4-methyl-2-oxoglutarate (HMG) into 2 molecules of pyruvate. Also contains a secondary oxaloacetate (OAA) decarboxylase activity due to the common pyruvate enolate transition state formed following C-C bond cleavage in the retro-aldol and decarboxylation reactions (By similarity).</text>
</comment>
<comment type="catalytic activity">
    <reaction>
        <text>4-hydroxy-4-methyl-2-oxoglutarate = 2 pyruvate</text>
        <dbReference type="Rhea" id="RHEA:22748"/>
        <dbReference type="ChEBI" id="CHEBI:15361"/>
        <dbReference type="ChEBI" id="CHEBI:58276"/>
        <dbReference type="EC" id="4.1.3.17"/>
    </reaction>
</comment>
<comment type="catalytic activity">
    <reaction>
        <text>oxaloacetate + H(+) = pyruvate + CO2</text>
        <dbReference type="Rhea" id="RHEA:15641"/>
        <dbReference type="ChEBI" id="CHEBI:15361"/>
        <dbReference type="ChEBI" id="CHEBI:15378"/>
        <dbReference type="ChEBI" id="CHEBI:16452"/>
        <dbReference type="ChEBI" id="CHEBI:16526"/>
        <dbReference type="EC" id="4.1.1.112"/>
    </reaction>
</comment>
<comment type="cofactor">
    <cofactor evidence="1">
        <name>a divalent metal cation</name>
        <dbReference type="ChEBI" id="CHEBI:60240"/>
    </cofactor>
    <text evidence="1">Divalent metal cation.</text>
</comment>
<comment type="subunit">
    <text evidence="1">Homotrimer.</text>
</comment>
<comment type="similarity">
    <text evidence="2">Belongs to the class II aldolase/RraA-like family.</text>
</comment>
<gene>
    <name type="ordered locus">At5g56260</name>
    <name type="ORF">K24C1.7</name>
</gene>
<name>RRAA3_ARATH</name>